<feature type="chain" id="PRO_0000411198" description="Cytochrome P450 82C3">
    <location>
        <begin position="1"/>
        <end position="512"/>
    </location>
</feature>
<feature type="transmembrane region" description="Helical" evidence="2">
    <location>
        <begin position="1"/>
        <end position="21"/>
    </location>
</feature>
<feature type="binding site" description="axial binding residue" evidence="1">
    <location>
        <position position="451"/>
    </location>
    <ligand>
        <name>heme</name>
        <dbReference type="ChEBI" id="CHEBI:30413"/>
    </ligand>
    <ligandPart>
        <name>Fe</name>
        <dbReference type="ChEBI" id="CHEBI:18248"/>
    </ligandPart>
</feature>
<name>C82C3_ARATH</name>
<proteinExistence type="evidence at transcript level"/>
<keyword id="KW-0349">Heme</keyword>
<keyword id="KW-0408">Iron</keyword>
<keyword id="KW-0472">Membrane</keyword>
<keyword id="KW-0479">Metal-binding</keyword>
<keyword id="KW-0503">Monooxygenase</keyword>
<keyword id="KW-0560">Oxidoreductase</keyword>
<keyword id="KW-1185">Reference proteome</keyword>
<keyword id="KW-0812">Transmembrane</keyword>
<keyword id="KW-1133">Transmembrane helix</keyword>
<sequence>MDTSLFSLFVSILVFVFIALFKKSKKPKYVKAPAPSGAWPIIGHLHLLGGKEQLLYRTLGKMADHYGPAMSLRLGSSETFVGSSFEVAKDCFTVNDKALASLMTAAAKHMGYVFWLEMRKIAMIELLSNRRLQMLNNVRVSEISMGVKDLYSLWVKKGGSEPVMVDLKSWLEDMIANMIMRMVAGKRYFGGGGAESSEHTEEARQWRKGIAKFFHLVGIFTVSDAFPKLGWLDLQGHEKEMKQTRRELDVILERWIENHRQQRKVSGTKHNDSDFVDVMLSLAEQGKLSHLQYDANTCIKTTCLALILGGSETSPSTLTWAISLLLNNKDMLKKVQDEIDIHVGRDRNVEDSDIKNLVYLQAIIKETLRLYPAAPLLGHREAMEDCTVAGYNVPCGTRLIVNVWKIQRDPKVYMEPNEFRPERFITGEAKDFDVRGQNFELMPFGSGRRSCPGPSLAMQMLHLGLARFLHSFEVKTVLDRPVDMSESPGLTITKATPLEVLINPRLKRELFV</sequence>
<protein>
    <recommendedName>
        <fullName>Cytochrome P450 82C3</fullName>
        <ecNumber>1.14.-.-</ecNumber>
    </recommendedName>
</protein>
<accession>O49396</accession>
<dbReference type="EC" id="1.14.-.-"/>
<dbReference type="EMBL" id="AL021636">
    <property type="protein sequence ID" value="CAA16594.2"/>
    <property type="molecule type" value="Genomic_DNA"/>
</dbReference>
<dbReference type="EMBL" id="AL161580">
    <property type="protein sequence ID" value="CAB79913.1"/>
    <property type="molecule type" value="Genomic_DNA"/>
</dbReference>
<dbReference type="EMBL" id="CP002687">
    <property type="protein sequence ID" value="AEE85982.1"/>
    <property type="molecule type" value="Genomic_DNA"/>
</dbReference>
<dbReference type="EMBL" id="AY142533">
    <property type="protein sequence ID" value="AAN13076.1"/>
    <property type="molecule type" value="mRNA"/>
</dbReference>
<dbReference type="PIR" id="H85374">
    <property type="entry name" value="H85374"/>
</dbReference>
<dbReference type="PIR" id="T04650">
    <property type="entry name" value="T04650"/>
</dbReference>
<dbReference type="RefSeq" id="NP_194923.1">
    <property type="nucleotide sequence ID" value="NM_119346.3"/>
</dbReference>
<dbReference type="SMR" id="O49396"/>
<dbReference type="BioGRID" id="14611">
    <property type="interactions" value="1"/>
</dbReference>
<dbReference type="FunCoup" id="O49396">
    <property type="interactions" value="224"/>
</dbReference>
<dbReference type="IntAct" id="O49396">
    <property type="interactions" value="1"/>
</dbReference>
<dbReference type="STRING" id="3702.O49396"/>
<dbReference type="PaxDb" id="3702-AT4G31950.1"/>
<dbReference type="ProteomicsDB" id="240306"/>
<dbReference type="EnsemblPlants" id="AT4G31950.1">
    <property type="protein sequence ID" value="AT4G31950.1"/>
    <property type="gene ID" value="AT4G31950"/>
</dbReference>
<dbReference type="GeneID" id="829325"/>
<dbReference type="Gramene" id="AT4G31950.1">
    <property type="protein sequence ID" value="AT4G31950.1"/>
    <property type="gene ID" value="AT4G31950"/>
</dbReference>
<dbReference type="KEGG" id="ath:AT4G31950"/>
<dbReference type="Araport" id="AT4G31950"/>
<dbReference type="TAIR" id="AT4G31950">
    <property type="gene designation" value="CYP82C3"/>
</dbReference>
<dbReference type="eggNOG" id="KOG0156">
    <property type="taxonomic scope" value="Eukaryota"/>
</dbReference>
<dbReference type="HOGENOM" id="CLU_001570_4_0_1"/>
<dbReference type="InParanoid" id="O49396"/>
<dbReference type="OMA" id="CYNNAVF"/>
<dbReference type="PhylomeDB" id="O49396"/>
<dbReference type="PRO" id="PR:O49396"/>
<dbReference type="Proteomes" id="UP000006548">
    <property type="component" value="Chromosome 4"/>
</dbReference>
<dbReference type="ExpressionAtlas" id="O49396">
    <property type="expression patterns" value="baseline and differential"/>
</dbReference>
<dbReference type="GO" id="GO:0016020">
    <property type="term" value="C:membrane"/>
    <property type="evidence" value="ECO:0007669"/>
    <property type="project" value="UniProtKB-SubCell"/>
</dbReference>
<dbReference type="GO" id="GO:0020037">
    <property type="term" value="F:heme binding"/>
    <property type="evidence" value="ECO:0007669"/>
    <property type="project" value="InterPro"/>
</dbReference>
<dbReference type="GO" id="GO:0005506">
    <property type="term" value="F:iron ion binding"/>
    <property type="evidence" value="ECO:0007669"/>
    <property type="project" value="InterPro"/>
</dbReference>
<dbReference type="GO" id="GO:0004497">
    <property type="term" value="F:monooxygenase activity"/>
    <property type="evidence" value="ECO:0007669"/>
    <property type="project" value="UniProtKB-KW"/>
</dbReference>
<dbReference type="GO" id="GO:0016705">
    <property type="term" value="F:oxidoreductase activity, acting on paired donors, with incorporation or reduction of molecular oxygen"/>
    <property type="evidence" value="ECO:0007669"/>
    <property type="project" value="InterPro"/>
</dbReference>
<dbReference type="CDD" id="cd20654">
    <property type="entry name" value="CYP82"/>
    <property type="match status" value="1"/>
</dbReference>
<dbReference type="FunFam" id="1.10.630.10:FF:000026">
    <property type="entry name" value="Cytochrome P450 82C4"/>
    <property type="match status" value="1"/>
</dbReference>
<dbReference type="Gene3D" id="1.10.630.10">
    <property type="entry name" value="Cytochrome P450"/>
    <property type="match status" value="1"/>
</dbReference>
<dbReference type="InterPro" id="IPR001128">
    <property type="entry name" value="Cyt_P450"/>
</dbReference>
<dbReference type="InterPro" id="IPR017972">
    <property type="entry name" value="Cyt_P450_CS"/>
</dbReference>
<dbReference type="InterPro" id="IPR002401">
    <property type="entry name" value="Cyt_P450_E_grp-I"/>
</dbReference>
<dbReference type="InterPro" id="IPR036396">
    <property type="entry name" value="Cyt_P450_sf"/>
</dbReference>
<dbReference type="InterPro" id="IPR050651">
    <property type="entry name" value="Plant_Cytochrome_P450_Monoox"/>
</dbReference>
<dbReference type="PANTHER" id="PTHR47947">
    <property type="entry name" value="CYTOCHROME P450 82C3-RELATED"/>
    <property type="match status" value="1"/>
</dbReference>
<dbReference type="PANTHER" id="PTHR47947:SF19">
    <property type="entry name" value="CYTOCHROME P450 82C3-RELATED"/>
    <property type="match status" value="1"/>
</dbReference>
<dbReference type="Pfam" id="PF00067">
    <property type="entry name" value="p450"/>
    <property type="match status" value="1"/>
</dbReference>
<dbReference type="PRINTS" id="PR00463">
    <property type="entry name" value="EP450I"/>
</dbReference>
<dbReference type="PRINTS" id="PR00385">
    <property type="entry name" value="P450"/>
</dbReference>
<dbReference type="SUPFAM" id="SSF48264">
    <property type="entry name" value="Cytochrome P450"/>
    <property type="match status" value="1"/>
</dbReference>
<dbReference type="PROSITE" id="PS00086">
    <property type="entry name" value="CYTOCHROME_P450"/>
    <property type="match status" value="1"/>
</dbReference>
<comment type="cofactor">
    <cofactor evidence="1">
        <name>heme</name>
        <dbReference type="ChEBI" id="CHEBI:30413"/>
    </cofactor>
</comment>
<comment type="subcellular location">
    <subcellularLocation>
        <location evidence="4">Membrane</location>
        <topology evidence="4">Single-pass membrane protein</topology>
    </subcellularLocation>
</comment>
<comment type="induction">
    <text evidence="3">By iron deficiency.</text>
</comment>
<comment type="similarity">
    <text evidence="4">Belongs to the cytochrome P450 family.</text>
</comment>
<organism>
    <name type="scientific">Arabidopsis thaliana</name>
    <name type="common">Mouse-ear cress</name>
    <dbReference type="NCBI Taxonomy" id="3702"/>
    <lineage>
        <taxon>Eukaryota</taxon>
        <taxon>Viridiplantae</taxon>
        <taxon>Streptophyta</taxon>
        <taxon>Embryophyta</taxon>
        <taxon>Tracheophyta</taxon>
        <taxon>Spermatophyta</taxon>
        <taxon>Magnoliopsida</taxon>
        <taxon>eudicotyledons</taxon>
        <taxon>Gunneridae</taxon>
        <taxon>Pentapetalae</taxon>
        <taxon>rosids</taxon>
        <taxon>malvids</taxon>
        <taxon>Brassicales</taxon>
        <taxon>Brassicaceae</taxon>
        <taxon>Camelineae</taxon>
        <taxon>Arabidopsis</taxon>
    </lineage>
</organism>
<evidence type="ECO:0000250" key="1"/>
<evidence type="ECO:0000255" key="2"/>
<evidence type="ECO:0000269" key="3">
    <source>
    </source>
</evidence>
<evidence type="ECO:0000305" key="4"/>
<reference key="1">
    <citation type="journal article" date="1999" name="Nature">
        <title>Sequence and analysis of chromosome 4 of the plant Arabidopsis thaliana.</title>
        <authorList>
            <person name="Mayer K.F.X."/>
            <person name="Schueller C."/>
            <person name="Wambutt R."/>
            <person name="Murphy G."/>
            <person name="Volckaert G."/>
            <person name="Pohl T."/>
            <person name="Duesterhoeft A."/>
            <person name="Stiekema W."/>
            <person name="Entian K.-D."/>
            <person name="Terryn N."/>
            <person name="Harris B."/>
            <person name="Ansorge W."/>
            <person name="Brandt P."/>
            <person name="Grivell L.A."/>
            <person name="Rieger M."/>
            <person name="Weichselgartner M."/>
            <person name="de Simone V."/>
            <person name="Obermaier B."/>
            <person name="Mache R."/>
            <person name="Mueller M."/>
            <person name="Kreis M."/>
            <person name="Delseny M."/>
            <person name="Puigdomenech P."/>
            <person name="Watson M."/>
            <person name="Schmidtheini T."/>
            <person name="Reichert B."/>
            <person name="Portetelle D."/>
            <person name="Perez-Alonso M."/>
            <person name="Boutry M."/>
            <person name="Bancroft I."/>
            <person name="Vos P."/>
            <person name="Hoheisel J."/>
            <person name="Zimmermann W."/>
            <person name="Wedler H."/>
            <person name="Ridley P."/>
            <person name="Langham S.-A."/>
            <person name="McCullagh B."/>
            <person name="Bilham L."/>
            <person name="Robben J."/>
            <person name="van der Schueren J."/>
            <person name="Grymonprez B."/>
            <person name="Chuang Y.-J."/>
            <person name="Vandenbussche F."/>
            <person name="Braeken M."/>
            <person name="Weltjens I."/>
            <person name="Voet M."/>
            <person name="Bastiaens I."/>
            <person name="Aert R."/>
            <person name="Defoor E."/>
            <person name="Weitzenegger T."/>
            <person name="Bothe G."/>
            <person name="Ramsperger U."/>
            <person name="Hilbert H."/>
            <person name="Braun M."/>
            <person name="Holzer E."/>
            <person name="Brandt A."/>
            <person name="Peters S."/>
            <person name="van Staveren M."/>
            <person name="Dirkse W."/>
            <person name="Mooijman P."/>
            <person name="Klein Lankhorst R."/>
            <person name="Rose M."/>
            <person name="Hauf J."/>
            <person name="Koetter P."/>
            <person name="Berneiser S."/>
            <person name="Hempel S."/>
            <person name="Feldpausch M."/>
            <person name="Lamberth S."/>
            <person name="Van den Daele H."/>
            <person name="De Keyser A."/>
            <person name="Buysshaert C."/>
            <person name="Gielen J."/>
            <person name="Villarroel R."/>
            <person name="De Clercq R."/>
            <person name="van Montagu M."/>
            <person name="Rogers J."/>
            <person name="Cronin A."/>
            <person name="Quail M.A."/>
            <person name="Bray-Allen S."/>
            <person name="Clark L."/>
            <person name="Doggett J."/>
            <person name="Hall S."/>
            <person name="Kay M."/>
            <person name="Lennard N."/>
            <person name="McLay K."/>
            <person name="Mayes R."/>
            <person name="Pettett A."/>
            <person name="Rajandream M.A."/>
            <person name="Lyne M."/>
            <person name="Benes V."/>
            <person name="Rechmann S."/>
            <person name="Borkova D."/>
            <person name="Bloecker H."/>
            <person name="Scharfe M."/>
            <person name="Grimm M."/>
            <person name="Loehnert T.-H."/>
            <person name="Dose S."/>
            <person name="de Haan M."/>
            <person name="Maarse A.C."/>
            <person name="Schaefer M."/>
            <person name="Mueller-Auer S."/>
            <person name="Gabel C."/>
            <person name="Fuchs M."/>
            <person name="Fartmann B."/>
            <person name="Granderath K."/>
            <person name="Dauner D."/>
            <person name="Herzl A."/>
            <person name="Neumann S."/>
            <person name="Argiriou A."/>
            <person name="Vitale D."/>
            <person name="Liguori R."/>
            <person name="Piravandi E."/>
            <person name="Massenet O."/>
            <person name="Quigley F."/>
            <person name="Clabauld G."/>
            <person name="Muendlein A."/>
            <person name="Felber R."/>
            <person name="Schnabl S."/>
            <person name="Hiller R."/>
            <person name="Schmidt W."/>
            <person name="Lecharny A."/>
            <person name="Aubourg S."/>
            <person name="Chefdor F."/>
            <person name="Cooke R."/>
            <person name="Berger C."/>
            <person name="Monfort A."/>
            <person name="Casacuberta E."/>
            <person name="Gibbons T."/>
            <person name="Weber N."/>
            <person name="Vandenbol M."/>
            <person name="Bargues M."/>
            <person name="Terol J."/>
            <person name="Torres A."/>
            <person name="Perez-Perez A."/>
            <person name="Purnelle B."/>
            <person name="Bent E."/>
            <person name="Johnson S."/>
            <person name="Tacon D."/>
            <person name="Jesse T."/>
            <person name="Heijnen L."/>
            <person name="Schwarz S."/>
            <person name="Scholler P."/>
            <person name="Heber S."/>
            <person name="Francs P."/>
            <person name="Bielke C."/>
            <person name="Frishman D."/>
            <person name="Haase D."/>
            <person name="Lemcke K."/>
            <person name="Mewes H.-W."/>
            <person name="Stocker S."/>
            <person name="Zaccaria P."/>
            <person name="Bevan M."/>
            <person name="Wilson R.K."/>
            <person name="de la Bastide M."/>
            <person name="Habermann K."/>
            <person name="Parnell L."/>
            <person name="Dedhia N."/>
            <person name="Gnoj L."/>
            <person name="Schutz K."/>
            <person name="Huang E."/>
            <person name="Spiegel L."/>
            <person name="Sekhon M."/>
            <person name="Murray J."/>
            <person name="Sheet P."/>
            <person name="Cordes M."/>
            <person name="Abu-Threideh J."/>
            <person name="Stoneking T."/>
            <person name="Kalicki J."/>
            <person name="Graves T."/>
            <person name="Harmon G."/>
            <person name="Edwards J."/>
            <person name="Latreille P."/>
            <person name="Courtney L."/>
            <person name="Cloud J."/>
            <person name="Abbott A."/>
            <person name="Scott K."/>
            <person name="Johnson D."/>
            <person name="Minx P."/>
            <person name="Bentley D."/>
            <person name="Fulton B."/>
            <person name="Miller N."/>
            <person name="Greco T."/>
            <person name="Kemp K."/>
            <person name="Kramer J."/>
            <person name="Fulton L."/>
            <person name="Mardis E."/>
            <person name="Dante M."/>
            <person name="Pepin K."/>
            <person name="Hillier L.W."/>
            <person name="Nelson J."/>
            <person name="Spieth J."/>
            <person name="Ryan E."/>
            <person name="Andrews S."/>
            <person name="Geisel C."/>
            <person name="Layman D."/>
            <person name="Du H."/>
            <person name="Ali J."/>
            <person name="Berghoff A."/>
            <person name="Jones K."/>
            <person name="Drone K."/>
            <person name="Cotton M."/>
            <person name="Joshu C."/>
            <person name="Antonoiu B."/>
            <person name="Zidanic M."/>
            <person name="Strong C."/>
            <person name="Sun H."/>
            <person name="Lamar B."/>
            <person name="Yordan C."/>
            <person name="Ma P."/>
            <person name="Zhong J."/>
            <person name="Preston R."/>
            <person name="Vil D."/>
            <person name="Shekher M."/>
            <person name="Matero A."/>
            <person name="Shah R."/>
            <person name="Swaby I.K."/>
            <person name="O'Shaughnessy A."/>
            <person name="Rodriguez M."/>
            <person name="Hoffman J."/>
            <person name="Till S."/>
            <person name="Granat S."/>
            <person name="Shohdy N."/>
            <person name="Hasegawa A."/>
            <person name="Hameed A."/>
            <person name="Lodhi M."/>
            <person name="Johnson A."/>
            <person name="Chen E."/>
            <person name="Marra M.A."/>
            <person name="Martienssen R."/>
            <person name="McCombie W.R."/>
        </authorList>
    </citation>
    <scope>NUCLEOTIDE SEQUENCE [LARGE SCALE GENOMIC DNA]</scope>
    <source>
        <strain>cv. Columbia</strain>
    </source>
</reference>
<reference key="2">
    <citation type="journal article" date="2017" name="Plant J.">
        <title>Araport11: a complete reannotation of the Arabidopsis thaliana reference genome.</title>
        <authorList>
            <person name="Cheng C.Y."/>
            <person name="Krishnakumar V."/>
            <person name="Chan A.P."/>
            <person name="Thibaud-Nissen F."/>
            <person name="Schobel S."/>
            <person name="Town C.D."/>
        </authorList>
    </citation>
    <scope>GENOME REANNOTATION</scope>
    <source>
        <strain>cv. Columbia</strain>
    </source>
</reference>
<reference key="3">
    <citation type="journal article" date="2003" name="Science">
        <title>Empirical analysis of transcriptional activity in the Arabidopsis genome.</title>
        <authorList>
            <person name="Yamada K."/>
            <person name="Lim J."/>
            <person name="Dale J.M."/>
            <person name="Chen H."/>
            <person name="Shinn P."/>
            <person name="Palm C.J."/>
            <person name="Southwick A.M."/>
            <person name="Wu H.C."/>
            <person name="Kim C.J."/>
            <person name="Nguyen M."/>
            <person name="Pham P.K."/>
            <person name="Cheuk R.F."/>
            <person name="Karlin-Newmann G."/>
            <person name="Liu S.X."/>
            <person name="Lam B."/>
            <person name="Sakano H."/>
            <person name="Wu T."/>
            <person name="Yu G."/>
            <person name="Miranda M."/>
            <person name="Quach H.L."/>
            <person name="Tripp M."/>
            <person name="Chang C.H."/>
            <person name="Lee J.M."/>
            <person name="Toriumi M.J."/>
            <person name="Chan M.M."/>
            <person name="Tang C.C."/>
            <person name="Onodera C.S."/>
            <person name="Deng J.M."/>
            <person name="Akiyama K."/>
            <person name="Ansari Y."/>
            <person name="Arakawa T."/>
            <person name="Banh J."/>
            <person name="Banno F."/>
            <person name="Bowser L."/>
            <person name="Brooks S.Y."/>
            <person name="Carninci P."/>
            <person name="Chao Q."/>
            <person name="Choy N."/>
            <person name="Enju A."/>
            <person name="Goldsmith A.D."/>
            <person name="Gurjal M."/>
            <person name="Hansen N.F."/>
            <person name="Hayashizaki Y."/>
            <person name="Johnson-Hopson C."/>
            <person name="Hsuan V.W."/>
            <person name="Iida K."/>
            <person name="Karnes M."/>
            <person name="Khan S."/>
            <person name="Koesema E."/>
            <person name="Ishida J."/>
            <person name="Jiang P.X."/>
            <person name="Jones T."/>
            <person name="Kawai J."/>
            <person name="Kamiya A."/>
            <person name="Meyers C."/>
            <person name="Nakajima M."/>
            <person name="Narusaka M."/>
            <person name="Seki M."/>
            <person name="Sakurai T."/>
            <person name="Satou M."/>
            <person name="Tamse R."/>
            <person name="Vaysberg M."/>
            <person name="Wallender E.K."/>
            <person name="Wong C."/>
            <person name="Yamamura Y."/>
            <person name="Yuan S."/>
            <person name="Shinozaki K."/>
            <person name="Davis R.W."/>
            <person name="Theologis A."/>
            <person name="Ecker J.R."/>
        </authorList>
    </citation>
    <scope>NUCLEOTIDE SEQUENCE [LARGE SCALE MRNA]</scope>
    <source>
        <strain>cv. Columbia</strain>
    </source>
</reference>
<reference key="4">
    <citation type="journal article" date="2011" name="J. Plant Physiol.">
        <title>Arabidopsis CYP82C4 expression is dependent on Fe availability and circadian rhythm, and correlates with genes involved in the early Fe deficiency response.</title>
        <authorList>
            <person name="Murgia I."/>
            <person name="Tarantino D."/>
            <person name="Soave C."/>
            <person name="Morandini P."/>
        </authorList>
    </citation>
    <scope>INDUCTION</scope>
</reference>
<gene>
    <name type="primary">CYP82C3</name>
    <name type="ordered locus">At4g31950</name>
    <name type="ORF">F10N7.240</name>
</gene>